<comment type="subcellular location">
    <subcellularLocation>
        <location>Membrane</location>
        <topology>Multi-pass membrane protein</topology>
    </subcellularLocation>
</comment>
<comment type="similarity">
    <text evidence="3">Belongs to the synaptogyrin family.</text>
</comment>
<organism>
    <name type="scientific">Homo sapiens</name>
    <name type="common">Human</name>
    <dbReference type="NCBI Taxonomy" id="9606"/>
    <lineage>
        <taxon>Eukaryota</taxon>
        <taxon>Metazoa</taxon>
        <taxon>Chordata</taxon>
        <taxon>Craniata</taxon>
        <taxon>Vertebrata</taxon>
        <taxon>Euteleostomi</taxon>
        <taxon>Mammalia</taxon>
        <taxon>Eutheria</taxon>
        <taxon>Euarchontoglires</taxon>
        <taxon>Primates</taxon>
        <taxon>Haplorrhini</taxon>
        <taxon>Catarrhini</taxon>
        <taxon>Hominidae</taxon>
        <taxon>Homo</taxon>
    </lineage>
</organism>
<protein>
    <recommendedName>
        <fullName>Synaptogyrin-4</fullName>
    </recommendedName>
</protein>
<proteinExistence type="evidence at protein level"/>
<dbReference type="EMBL" id="AJ011733">
    <property type="protein sequence ID" value="CAA09754.1"/>
    <property type="molecule type" value="mRNA"/>
</dbReference>
<dbReference type="EMBL" id="CH471177">
    <property type="protein sequence ID" value="EAW52339.1"/>
    <property type="molecule type" value="Genomic_DNA"/>
</dbReference>
<dbReference type="EMBL" id="BC106891">
    <property type="protein sequence ID" value="AAI06892.1"/>
    <property type="molecule type" value="mRNA"/>
</dbReference>
<dbReference type="CCDS" id="CCDS12717.1"/>
<dbReference type="RefSeq" id="NP_036583.2">
    <property type="nucleotide sequence ID" value="NM_012451.3"/>
</dbReference>
<dbReference type="RefSeq" id="XP_005258750.1">
    <property type="nucleotide sequence ID" value="XM_005258693.4"/>
</dbReference>
<dbReference type="RefSeq" id="XP_005258751.1">
    <property type="nucleotide sequence ID" value="XM_005258694.2"/>
</dbReference>
<dbReference type="RefSeq" id="XP_054176385.1">
    <property type="nucleotide sequence ID" value="XM_054320410.1"/>
</dbReference>
<dbReference type="RefSeq" id="XP_054176386.1">
    <property type="nucleotide sequence ID" value="XM_054320411.1"/>
</dbReference>
<dbReference type="SMR" id="O95473"/>
<dbReference type="BioGRID" id="117090">
    <property type="interactions" value="3"/>
</dbReference>
<dbReference type="FunCoup" id="O95473">
    <property type="interactions" value="5"/>
</dbReference>
<dbReference type="IntAct" id="O95473">
    <property type="interactions" value="1"/>
</dbReference>
<dbReference type="STRING" id="9606.ENSP00000344041"/>
<dbReference type="iPTMnet" id="O95473"/>
<dbReference type="PhosphoSitePlus" id="O95473"/>
<dbReference type="BioMuta" id="SYNGR4"/>
<dbReference type="jPOST" id="O95473"/>
<dbReference type="MassIVE" id="O95473"/>
<dbReference type="PaxDb" id="9606-ENSP00000344041"/>
<dbReference type="PeptideAtlas" id="O95473"/>
<dbReference type="ProteomicsDB" id="50905"/>
<dbReference type="Antibodypedia" id="31700">
    <property type="antibodies" value="141 antibodies from 30 providers"/>
</dbReference>
<dbReference type="DNASU" id="23546"/>
<dbReference type="Ensembl" id="ENST00000344846.7">
    <property type="protein sequence ID" value="ENSP00000344041.1"/>
    <property type="gene ID" value="ENSG00000105467.9"/>
</dbReference>
<dbReference type="GeneID" id="23546"/>
<dbReference type="KEGG" id="hsa:23546"/>
<dbReference type="MANE-Select" id="ENST00000344846.7">
    <property type="protein sequence ID" value="ENSP00000344041.1"/>
    <property type="RefSeq nucleotide sequence ID" value="NM_012451.4"/>
    <property type="RefSeq protein sequence ID" value="NP_036583.2"/>
</dbReference>
<dbReference type="UCSC" id="uc002piz.4">
    <property type="organism name" value="human"/>
</dbReference>
<dbReference type="AGR" id="HGNC:11502"/>
<dbReference type="CTD" id="23546"/>
<dbReference type="DisGeNET" id="23546"/>
<dbReference type="GeneCards" id="SYNGR4"/>
<dbReference type="HGNC" id="HGNC:11502">
    <property type="gene designation" value="SYNGR4"/>
</dbReference>
<dbReference type="HPA" id="ENSG00000105467">
    <property type="expression patterns" value="Tissue enriched (testis)"/>
</dbReference>
<dbReference type="MIM" id="608373">
    <property type="type" value="gene"/>
</dbReference>
<dbReference type="neXtProt" id="NX_O95473"/>
<dbReference type="OpenTargets" id="ENSG00000105467"/>
<dbReference type="PharmGKB" id="PA36284"/>
<dbReference type="VEuPathDB" id="HostDB:ENSG00000105467"/>
<dbReference type="eggNOG" id="KOG4016">
    <property type="taxonomic scope" value="Eukaryota"/>
</dbReference>
<dbReference type="GeneTree" id="ENSGT00950000182935"/>
<dbReference type="HOGENOM" id="CLU_1209470_0_0_1"/>
<dbReference type="InParanoid" id="O95473"/>
<dbReference type="OMA" id="IWIFQAY"/>
<dbReference type="OrthoDB" id="10041611at2759"/>
<dbReference type="PAN-GO" id="O95473">
    <property type="GO annotations" value="2 GO annotations based on evolutionary models"/>
</dbReference>
<dbReference type="PhylomeDB" id="O95473"/>
<dbReference type="TreeFam" id="TF320995"/>
<dbReference type="PathwayCommons" id="O95473"/>
<dbReference type="BioGRID-ORCS" id="23546">
    <property type="hits" value="13 hits in 1142 CRISPR screens"/>
</dbReference>
<dbReference type="ChiTaRS" id="SYNGR4">
    <property type="organism name" value="human"/>
</dbReference>
<dbReference type="GenomeRNAi" id="23546"/>
<dbReference type="Pharos" id="O95473">
    <property type="development level" value="Tdark"/>
</dbReference>
<dbReference type="PRO" id="PR:O95473"/>
<dbReference type="Proteomes" id="UP000005640">
    <property type="component" value="Chromosome 19"/>
</dbReference>
<dbReference type="RNAct" id="O95473">
    <property type="molecule type" value="protein"/>
</dbReference>
<dbReference type="Bgee" id="ENSG00000105467">
    <property type="expression patterns" value="Expressed in right testis and 91 other cell types or tissues"/>
</dbReference>
<dbReference type="ExpressionAtlas" id="O95473">
    <property type="expression patterns" value="baseline and differential"/>
</dbReference>
<dbReference type="GO" id="GO:0031594">
    <property type="term" value="C:neuromuscular junction"/>
    <property type="evidence" value="ECO:0000318"/>
    <property type="project" value="GO_Central"/>
</dbReference>
<dbReference type="GO" id="GO:0030672">
    <property type="term" value="C:synaptic vesicle membrane"/>
    <property type="evidence" value="ECO:0000318"/>
    <property type="project" value="GO_Central"/>
</dbReference>
<dbReference type="InterPro" id="IPR008253">
    <property type="entry name" value="Marvel"/>
</dbReference>
<dbReference type="InterPro" id="IPR016579">
    <property type="entry name" value="Synaptogyrin"/>
</dbReference>
<dbReference type="PANTHER" id="PTHR10838">
    <property type="entry name" value="SYNAPTOGYRIN"/>
    <property type="match status" value="1"/>
</dbReference>
<dbReference type="PANTHER" id="PTHR10838:SF22">
    <property type="entry name" value="SYNAPTOGYRIN-4"/>
    <property type="match status" value="1"/>
</dbReference>
<dbReference type="Pfam" id="PF01284">
    <property type="entry name" value="MARVEL"/>
    <property type="match status" value="1"/>
</dbReference>
<dbReference type="PIRSF" id="PIRSF011282">
    <property type="entry name" value="Synaptogyrin"/>
    <property type="match status" value="1"/>
</dbReference>
<dbReference type="PROSITE" id="PS51225">
    <property type="entry name" value="MARVEL"/>
    <property type="match status" value="1"/>
</dbReference>
<name>SNG4_HUMAN</name>
<evidence type="ECO:0000255" key="1"/>
<evidence type="ECO:0000255" key="2">
    <source>
        <dbReference type="PROSITE-ProRule" id="PRU00581"/>
    </source>
</evidence>
<evidence type="ECO:0000305" key="3"/>
<sequence length="234" mass="25820">MHIPKSLQELANSEAVQFLRRPKTITRVFEGVFSLIVFSSLLTDGYQNKMESPQLHCILNSNSVACSFAVGAGFLAFLSCLAFLVLDTQETRIAGTRFKTAFQLLDFILAVLWAVVWFMGFCFLANQWQHSPPKEFLLGSSSAQAAIAFTFFSILVWIFQAYLAFQDLRNDAPVPYKRFLDEGGMVLTTLPLPSANSPVNMPTTGPNSLSYASSALSPCLTAPKSPRLAMMPDN</sequence>
<feature type="chain" id="PRO_0000183998" description="Synaptogyrin-4">
    <location>
        <begin position="1"/>
        <end position="234"/>
    </location>
</feature>
<feature type="transmembrane region" description="Helical" evidence="1">
    <location>
        <begin position="25"/>
        <end position="45"/>
    </location>
</feature>
<feature type="transmembrane region" description="Helical" evidence="1">
    <location>
        <begin position="66"/>
        <end position="86"/>
    </location>
</feature>
<feature type="transmembrane region" description="Helical" evidence="1">
    <location>
        <begin position="104"/>
        <end position="124"/>
    </location>
</feature>
<feature type="transmembrane region" description="Helical" evidence="1">
    <location>
        <begin position="145"/>
        <end position="165"/>
    </location>
</feature>
<feature type="domain" description="MARVEL" evidence="2">
    <location>
        <begin position="18"/>
        <end position="169"/>
    </location>
</feature>
<feature type="sequence variant" id="VAR_052245" description="In dbSNP:rs919804.">
    <original>R</original>
    <variation>W</variation>
    <location>
        <position position="27"/>
    </location>
</feature>
<feature type="sequence conflict" description="In Ref. 1; CAA09754." evidence="3" ref="1">
    <original>F</original>
    <variation>I</variation>
    <location>
        <position position="38"/>
    </location>
</feature>
<reference key="1">
    <citation type="submission" date="1998-10" db="EMBL/GenBank/DDBJ databases">
        <title>Cloning of a novel member of synaptogyrin gene family.</title>
        <authorList>
            <person name="Kedra D."/>
            <person name="Dumanski J.P."/>
        </authorList>
    </citation>
    <scope>NUCLEOTIDE SEQUENCE [MRNA]</scope>
</reference>
<reference key="2">
    <citation type="submission" date="2005-07" db="EMBL/GenBank/DDBJ databases">
        <authorList>
            <person name="Mural R.J."/>
            <person name="Istrail S."/>
            <person name="Sutton G.G."/>
            <person name="Florea L."/>
            <person name="Halpern A.L."/>
            <person name="Mobarry C.M."/>
            <person name="Lippert R."/>
            <person name="Walenz B."/>
            <person name="Shatkay H."/>
            <person name="Dew I."/>
            <person name="Miller J.R."/>
            <person name="Flanigan M.J."/>
            <person name="Edwards N.J."/>
            <person name="Bolanos R."/>
            <person name="Fasulo D."/>
            <person name="Halldorsson B.V."/>
            <person name="Hannenhalli S."/>
            <person name="Turner R."/>
            <person name="Yooseph S."/>
            <person name="Lu F."/>
            <person name="Nusskern D.R."/>
            <person name="Shue B.C."/>
            <person name="Zheng X.H."/>
            <person name="Zhong F."/>
            <person name="Delcher A.L."/>
            <person name="Huson D.H."/>
            <person name="Kravitz S.A."/>
            <person name="Mouchard L."/>
            <person name="Reinert K."/>
            <person name="Remington K.A."/>
            <person name="Clark A.G."/>
            <person name="Waterman M.S."/>
            <person name="Eichler E.E."/>
            <person name="Adams M.D."/>
            <person name="Hunkapiller M.W."/>
            <person name="Myers E.W."/>
            <person name="Venter J.C."/>
        </authorList>
    </citation>
    <scope>NUCLEOTIDE SEQUENCE [LARGE SCALE GENOMIC DNA]</scope>
</reference>
<reference key="3">
    <citation type="journal article" date="2004" name="Genome Res.">
        <title>The status, quality, and expansion of the NIH full-length cDNA project: the Mammalian Gene Collection (MGC).</title>
        <authorList>
            <consortium name="The MGC Project Team"/>
        </authorList>
    </citation>
    <scope>NUCLEOTIDE SEQUENCE [LARGE SCALE MRNA]</scope>
</reference>
<gene>
    <name type="primary">SYNGR4</name>
</gene>
<keyword id="KW-0472">Membrane</keyword>
<keyword id="KW-1267">Proteomics identification</keyword>
<keyword id="KW-1185">Reference proteome</keyword>
<keyword id="KW-0812">Transmembrane</keyword>
<keyword id="KW-1133">Transmembrane helix</keyword>
<accession>O95473</accession>
<accession>Q3KP58</accession>